<proteinExistence type="inferred from homology"/>
<reference key="1">
    <citation type="submission" date="2007-05" db="EMBL/GenBank/DDBJ databases">
        <title>Complete sequence of Geobacter uraniireducens Rf4.</title>
        <authorList>
            <consortium name="US DOE Joint Genome Institute"/>
            <person name="Copeland A."/>
            <person name="Lucas S."/>
            <person name="Lapidus A."/>
            <person name="Barry K."/>
            <person name="Detter J.C."/>
            <person name="Glavina del Rio T."/>
            <person name="Hammon N."/>
            <person name="Israni S."/>
            <person name="Dalin E."/>
            <person name="Tice H."/>
            <person name="Pitluck S."/>
            <person name="Chertkov O."/>
            <person name="Brettin T."/>
            <person name="Bruce D."/>
            <person name="Han C."/>
            <person name="Schmutz J."/>
            <person name="Larimer F."/>
            <person name="Land M."/>
            <person name="Hauser L."/>
            <person name="Kyrpides N."/>
            <person name="Mikhailova N."/>
            <person name="Shelobolina E."/>
            <person name="Aklujkar M."/>
            <person name="Lovley D."/>
            <person name="Richardson P."/>
        </authorList>
    </citation>
    <scope>NUCLEOTIDE SEQUENCE [LARGE SCALE GENOMIC DNA]</scope>
    <source>
        <strain>ATCC BAA-1134 / JCM 13001 / Rf4</strain>
    </source>
</reference>
<comment type="function">
    <text evidence="1">Catalyzes the pyruvoyl-dependent decarboxylation of aspartate to produce beta-alanine.</text>
</comment>
<comment type="catalytic activity">
    <reaction evidence="1">
        <text>L-aspartate + H(+) = beta-alanine + CO2</text>
        <dbReference type="Rhea" id="RHEA:19497"/>
        <dbReference type="ChEBI" id="CHEBI:15378"/>
        <dbReference type="ChEBI" id="CHEBI:16526"/>
        <dbReference type="ChEBI" id="CHEBI:29991"/>
        <dbReference type="ChEBI" id="CHEBI:57966"/>
        <dbReference type="EC" id="4.1.1.11"/>
    </reaction>
</comment>
<comment type="cofactor">
    <cofactor evidence="1">
        <name>pyruvate</name>
        <dbReference type="ChEBI" id="CHEBI:15361"/>
    </cofactor>
    <text evidence="1">Binds 1 pyruvoyl group covalently per subunit.</text>
</comment>
<comment type="pathway">
    <text evidence="1">Cofactor biosynthesis; (R)-pantothenate biosynthesis; beta-alanine from L-aspartate: step 1/1.</text>
</comment>
<comment type="subunit">
    <text evidence="1">Heterooctamer of four alpha and four beta subunits.</text>
</comment>
<comment type="subcellular location">
    <subcellularLocation>
        <location evidence="1">Cytoplasm</location>
    </subcellularLocation>
</comment>
<comment type="PTM">
    <text evidence="1">Is synthesized initially as an inactive proenzyme, which is activated by self-cleavage at a specific serine bond to produce a beta-subunit with a hydroxyl group at its C-terminus and an alpha-subunit with a pyruvoyl group at its N-terminus.</text>
</comment>
<comment type="similarity">
    <text evidence="1">Belongs to the PanD family.</text>
</comment>
<name>PAND_GEOUR</name>
<protein>
    <recommendedName>
        <fullName evidence="1">Aspartate 1-decarboxylase</fullName>
        <ecNumber evidence="1">4.1.1.11</ecNumber>
    </recommendedName>
    <alternativeName>
        <fullName evidence="1">Aspartate alpha-decarboxylase</fullName>
    </alternativeName>
    <component>
        <recommendedName>
            <fullName evidence="1">Aspartate 1-decarboxylase beta chain</fullName>
        </recommendedName>
    </component>
    <component>
        <recommendedName>
            <fullName evidence="1">Aspartate 1-decarboxylase alpha chain</fullName>
        </recommendedName>
    </component>
</protein>
<organism>
    <name type="scientific">Geotalea uraniireducens (strain Rf4)</name>
    <name type="common">Geobacter uraniireducens</name>
    <dbReference type="NCBI Taxonomy" id="351605"/>
    <lineage>
        <taxon>Bacteria</taxon>
        <taxon>Pseudomonadati</taxon>
        <taxon>Thermodesulfobacteriota</taxon>
        <taxon>Desulfuromonadia</taxon>
        <taxon>Geobacterales</taxon>
        <taxon>Geobacteraceae</taxon>
        <taxon>Geotalea</taxon>
    </lineage>
</organism>
<evidence type="ECO:0000255" key="1">
    <source>
        <dbReference type="HAMAP-Rule" id="MF_00446"/>
    </source>
</evidence>
<gene>
    <name evidence="1" type="primary">panD</name>
    <name type="ordered locus">Gura_2080</name>
</gene>
<accession>A5G3A2</accession>
<keyword id="KW-0068">Autocatalytic cleavage</keyword>
<keyword id="KW-0963">Cytoplasm</keyword>
<keyword id="KW-0210">Decarboxylase</keyword>
<keyword id="KW-0456">Lyase</keyword>
<keyword id="KW-0566">Pantothenate biosynthesis</keyword>
<keyword id="KW-0670">Pyruvate</keyword>
<keyword id="KW-1185">Reference proteome</keyword>
<keyword id="KW-0704">Schiff base</keyword>
<keyword id="KW-0865">Zymogen</keyword>
<dbReference type="EC" id="4.1.1.11" evidence="1"/>
<dbReference type="EMBL" id="CP000698">
    <property type="protein sequence ID" value="ABQ26270.1"/>
    <property type="molecule type" value="Genomic_DNA"/>
</dbReference>
<dbReference type="RefSeq" id="WP_011938972.1">
    <property type="nucleotide sequence ID" value="NC_009483.1"/>
</dbReference>
<dbReference type="SMR" id="A5G3A2"/>
<dbReference type="STRING" id="351605.Gura_2080"/>
<dbReference type="KEGG" id="gur:Gura_2080"/>
<dbReference type="HOGENOM" id="CLU_115305_2_0_7"/>
<dbReference type="OrthoDB" id="9803983at2"/>
<dbReference type="UniPathway" id="UPA00028">
    <property type="reaction ID" value="UER00002"/>
</dbReference>
<dbReference type="Proteomes" id="UP000006695">
    <property type="component" value="Chromosome"/>
</dbReference>
<dbReference type="GO" id="GO:0005829">
    <property type="term" value="C:cytosol"/>
    <property type="evidence" value="ECO:0007669"/>
    <property type="project" value="TreeGrafter"/>
</dbReference>
<dbReference type="GO" id="GO:0004068">
    <property type="term" value="F:aspartate 1-decarboxylase activity"/>
    <property type="evidence" value="ECO:0007669"/>
    <property type="project" value="UniProtKB-UniRule"/>
</dbReference>
<dbReference type="GO" id="GO:0006523">
    <property type="term" value="P:alanine biosynthetic process"/>
    <property type="evidence" value="ECO:0007669"/>
    <property type="project" value="InterPro"/>
</dbReference>
<dbReference type="GO" id="GO:0015940">
    <property type="term" value="P:pantothenate biosynthetic process"/>
    <property type="evidence" value="ECO:0007669"/>
    <property type="project" value="UniProtKB-UniRule"/>
</dbReference>
<dbReference type="CDD" id="cd06919">
    <property type="entry name" value="Asp_decarbox"/>
    <property type="match status" value="1"/>
</dbReference>
<dbReference type="Gene3D" id="2.40.40.20">
    <property type="match status" value="1"/>
</dbReference>
<dbReference type="HAMAP" id="MF_00446">
    <property type="entry name" value="PanD"/>
    <property type="match status" value="1"/>
</dbReference>
<dbReference type="InterPro" id="IPR009010">
    <property type="entry name" value="Asp_de-COase-like_dom_sf"/>
</dbReference>
<dbReference type="InterPro" id="IPR003190">
    <property type="entry name" value="Asp_decarbox"/>
</dbReference>
<dbReference type="NCBIfam" id="TIGR00223">
    <property type="entry name" value="panD"/>
    <property type="match status" value="1"/>
</dbReference>
<dbReference type="PANTHER" id="PTHR21012">
    <property type="entry name" value="ASPARTATE 1-DECARBOXYLASE"/>
    <property type="match status" value="1"/>
</dbReference>
<dbReference type="PANTHER" id="PTHR21012:SF0">
    <property type="entry name" value="ASPARTATE 1-DECARBOXYLASE"/>
    <property type="match status" value="1"/>
</dbReference>
<dbReference type="Pfam" id="PF02261">
    <property type="entry name" value="Asp_decarbox"/>
    <property type="match status" value="1"/>
</dbReference>
<dbReference type="PIRSF" id="PIRSF006246">
    <property type="entry name" value="Asp_decarbox"/>
    <property type="match status" value="1"/>
</dbReference>
<dbReference type="SUPFAM" id="SSF50692">
    <property type="entry name" value="ADC-like"/>
    <property type="match status" value="1"/>
</dbReference>
<feature type="chain" id="PRO_1000080920" description="Aspartate 1-decarboxylase beta chain" evidence="1">
    <location>
        <begin position="1"/>
        <end position="24"/>
    </location>
</feature>
<feature type="chain" id="PRO_1000080921" description="Aspartate 1-decarboxylase alpha chain" evidence="1">
    <location>
        <begin position="25"/>
        <end position="132"/>
    </location>
</feature>
<feature type="active site" description="Schiff-base intermediate with substrate; via pyruvic acid" evidence="1">
    <location>
        <position position="25"/>
    </location>
</feature>
<feature type="active site" description="Proton donor" evidence="1">
    <location>
        <position position="58"/>
    </location>
</feature>
<feature type="binding site" evidence="1">
    <location>
        <position position="57"/>
    </location>
    <ligand>
        <name>substrate</name>
    </ligand>
</feature>
<feature type="binding site" evidence="1">
    <location>
        <begin position="73"/>
        <end position="75"/>
    </location>
    <ligand>
        <name>substrate</name>
    </ligand>
</feature>
<feature type="modified residue" description="Pyruvic acid (Ser)" evidence="1">
    <location>
        <position position="25"/>
    </location>
</feature>
<sequence length="132" mass="14634">MDRKMLKSKIHRATVTGADLHYEGSITIDKDLMEAADIIPYEAVCIWDVDNGSRFETYAIEGERGSGVICINGAAARMVAPKDLVIIASFVNMNNEEALKHEPKLVFVDDQNRMLPARKEVAGQGTLKKVAW</sequence>